<proteinExistence type="inferred from homology"/>
<protein>
    <recommendedName>
        <fullName evidence="1">Small ribosomal subunit protein uS13</fullName>
    </recommendedName>
    <alternativeName>
        <fullName evidence="3">30S ribosomal protein S13</fullName>
    </alternativeName>
</protein>
<evidence type="ECO:0000255" key="1">
    <source>
        <dbReference type="HAMAP-Rule" id="MF_01315"/>
    </source>
</evidence>
<evidence type="ECO:0000256" key="2">
    <source>
        <dbReference type="SAM" id="MobiDB-lite"/>
    </source>
</evidence>
<evidence type="ECO:0000305" key="3"/>
<organism>
    <name type="scientific">Photorhabdus laumondii subsp. laumondii (strain DSM 15139 / CIP 105565 / TT01)</name>
    <name type="common">Photorhabdus luminescens subsp. laumondii</name>
    <dbReference type="NCBI Taxonomy" id="243265"/>
    <lineage>
        <taxon>Bacteria</taxon>
        <taxon>Pseudomonadati</taxon>
        <taxon>Pseudomonadota</taxon>
        <taxon>Gammaproteobacteria</taxon>
        <taxon>Enterobacterales</taxon>
        <taxon>Morganellaceae</taxon>
        <taxon>Photorhabdus</taxon>
    </lineage>
</organism>
<feature type="chain" id="PRO_0000230542" description="Small ribosomal subunit protein uS13">
    <location>
        <begin position="1"/>
        <end position="118"/>
    </location>
</feature>
<feature type="region of interest" description="Disordered" evidence="2">
    <location>
        <begin position="91"/>
        <end position="118"/>
    </location>
</feature>
<keyword id="KW-1185">Reference proteome</keyword>
<keyword id="KW-0687">Ribonucleoprotein</keyword>
<keyword id="KW-0689">Ribosomal protein</keyword>
<keyword id="KW-0694">RNA-binding</keyword>
<keyword id="KW-0699">rRNA-binding</keyword>
<keyword id="KW-0820">tRNA-binding</keyword>
<comment type="function">
    <text evidence="1">Located at the top of the head of the 30S subunit, it contacts several helices of the 16S rRNA. In the 70S ribosome it contacts the 23S rRNA (bridge B1a) and protein L5 of the 50S subunit (bridge B1b), connecting the 2 subunits; these bridges are implicated in subunit movement. Contacts the tRNAs in the A and P-sites.</text>
</comment>
<comment type="subunit">
    <text evidence="1">Part of the 30S ribosomal subunit. Forms a loose heterodimer with protein S19. Forms two bridges to the 50S subunit in the 70S ribosome.</text>
</comment>
<comment type="similarity">
    <text evidence="1">Belongs to the universal ribosomal protein uS13 family.</text>
</comment>
<reference key="1">
    <citation type="journal article" date="2003" name="Nat. Biotechnol.">
        <title>The genome sequence of the entomopathogenic bacterium Photorhabdus luminescens.</title>
        <authorList>
            <person name="Duchaud E."/>
            <person name="Rusniok C."/>
            <person name="Frangeul L."/>
            <person name="Buchrieser C."/>
            <person name="Givaudan A."/>
            <person name="Taourit S."/>
            <person name="Bocs S."/>
            <person name="Boursaux-Eude C."/>
            <person name="Chandler M."/>
            <person name="Charles J.-F."/>
            <person name="Dassa E."/>
            <person name="Derose R."/>
            <person name="Derzelle S."/>
            <person name="Freyssinet G."/>
            <person name="Gaudriault S."/>
            <person name="Medigue C."/>
            <person name="Lanois A."/>
            <person name="Powell K."/>
            <person name="Siguier P."/>
            <person name="Vincent R."/>
            <person name="Wingate V."/>
            <person name="Zouine M."/>
            <person name="Glaser P."/>
            <person name="Boemare N."/>
            <person name="Danchin A."/>
            <person name="Kunst F."/>
        </authorList>
    </citation>
    <scope>NUCLEOTIDE SEQUENCE [LARGE SCALE GENOMIC DNA]</scope>
    <source>
        <strain>DSM 15139 / CIP 105565 / TT01</strain>
    </source>
</reference>
<dbReference type="EMBL" id="BX571874">
    <property type="protein sequence ID" value="CAE17077.1"/>
    <property type="molecule type" value="Genomic_DNA"/>
</dbReference>
<dbReference type="RefSeq" id="WP_011148774.1">
    <property type="nucleotide sequence ID" value="NC_005126.1"/>
</dbReference>
<dbReference type="SMR" id="Q7MYH2"/>
<dbReference type="STRING" id="243265.plu4705"/>
<dbReference type="GeneID" id="88808136"/>
<dbReference type="KEGG" id="plu:plu4705"/>
<dbReference type="eggNOG" id="COG0099">
    <property type="taxonomic scope" value="Bacteria"/>
</dbReference>
<dbReference type="HOGENOM" id="CLU_103849_1_2_6"/>
<dbReference type="OrthoDB" id="9803610at2"/>
<dbReference type="Proteomes" id="UP000002514">
    <property type="component" value="Chromosome"/>
</dbReference>
<dbReference type="GO" id="GO:0005829">
    <property type="term" value="C:cytosol"/>
    <property type="evidence" value="ECO:0007669"/>
    <property type="project" value="TreeGrafter"/>
</dbReference>
<dbReference type="GO" id="GO:0015935">
    <property type="term" value="C:small ribosomal subunit"/>
    <property type="evidence" value="ECO:0007669"/>
    <property type="project" value="TreeGrafter"/>
</dbReference>
<dbReference type="GO" id="GO:0019843">
    <property type="term" value="F:rRNA binding"/>
    <property type="evidence" value="ECO:0007669"/>
    <property type="project" value="UniProtKB-UniRule"/>
</dbReference>
<dbReference type="GO" id="GO:0003735">
    <property type="term" value="F:structural constituent of ribosome"/>
    <property type="evidence" value="ECO:0007669"/>
    <property type="project" value="InterPro"/>
</dbReference>
<dbReference type="GO" id="GO:0000049">
    <property type="term" value="F:tRNA binding"/>
    <property type="evidence" value="ECO:0007669"/>
    <property type="project" value="UniProtKB-UniRule"/>
</dbReference>
<dbReference type="GO" id="GO:0006412">
    <property type="term" value="P:translation"/>
    <property type="evidence" value="ECO:0007669"/>
    <property type="project" value="UniProtKB-UniRule"/>
</dbReference>
<dbReference type="FunFam" id="1.10.8.50:FF:000001">
    <property type="entry name" value="30S ribosomal protein S13"/>
    <property type="match status" value="1"/>
</dbReference>
<dbReference type="FunFam" id="4.10.910.10:FF:000001">
    <property type="entry name" value="30S ribosomal protein S13"/>
    <property type="match status" value="1"/>
</dbReference>
<dbReference type="Gene3D" id="1.10.8.50">
    <property type="match status" value="1"/>
</dbReference>
<dbReference type="Gene3D" id="4.10.910.10">
    <property type="entry name" value="30s ribosomal protein s13, domain 2"/>
    <property type="match status" value="1"/>
</dbReference>
<dbReference type="HAMAP" id="MF_01315">
    <property type="entry name" value="Ribosomal_uS13"/>
    <property type="match status" value="1"/>
</dbReference>
<dbReference type="InterPro" id="IPR027437">
    <property type="entry name" value="Rbsml_uS13_C"/>
</dbReference>
<dbReference type="InterPro" id="IPR001892">
    <property type="entry name" value="Ribosomal_uS13"/>
</dbReference>
<dbReference type="InterPro" id="IPR010979">
    <property type="entry name" value="Ribosomal_uS13-like_H2TH"/>
</dbReference>
<dbReference type="InterPro" id="IPR019980">
    <property type="entry name" value="Ribosomal_uS13_bac-type"/>
</dbReference>
<dbReference type="InterPro" id="IPR018269">
    <property type="entry name" value="Ribosomal_uS13_CS"/>
</dbReference>
<dbReference type="NCBIfam" id="TIGR03631">
    <property type="entry name" value="uS13_bact"/>
    <property type="match status" value="1"/>
</dbReference>
<dbReference type="PANTHER" id="PTHR10871">
    <property type="entry name" value="30S RIBOSOMAL PROTEIN S13/40S RIBOSOMAL PROTEIN S18"/>
    <property type="match status" value="1"/>
</dbReference>
<dbReference type="PANTHER" id="PTHR10871:SF1">
    <property type="entry name" value="SMALL RIBOSOMAL SUBUNIT PROTEIN US13M"/>
    <property type="match status" value="1"/>
</dbReference>
<dbReference type="Pfam" id="PF00416">
    <property type="entry name" value="Ribosomal_S13"/>
    <property type="match status" value="1"/>
</dbReference>
<dbReference type="PIRSF" id="PIRSF002134">
    <property type="entry name" value="Ribosomal_S13"/>
    <property type="match status" value="1"/>
</dbReference>
<dbReference type="SUPFAM" id="SSF46946">
    <property type="entry name" value="S13-like H2TH domain"/>
    <property type="match status" value="1"/>
</dbReference>
<dbReference type="PROSITE" id="PS00646">
    <property type="entry name" value="RIBOSOMAL_S13_1"/>
    <property type="match status" value="1"/>
</dbReference>
<dbReference type="PROSITE" id="PS50159">
    <property type="entry name" value="RIBOSOMAL_S13_2"/>
    <property type="match status" value="1"/>
</dbReference>
<name>RS13_PHOLL</name>
<sequence length="118" mass="13241">MARIAGINIPDQKHTVIALTSIYGIGKTRSQAICAAAGIAEHVKISELSEEQIDKLRDEVAKYVVEGDLRREVTLSIKRLMDLGTYRGLRHRRGLPVRGQRTKTNARTRKGPRKPIKK</sequence>
<gene>
    <name evidence="1" type="primary">rpsM</name>
    <name type="ordered locus">plu4705</name>
</gene>
<accession>Q7MYH2</accession>